<reference key="1">
    <citation type="journal article" date="2005" name="Nucleic Acids Res.">
        <title>The genome sequence of Salmonella enterica serovar Choleraesuis, a highly invasive and resistant zoonotic pathogen.</title>
        <authorList>
            <person name="Chiu C.-H."/>
            <person name="Tang P."/>
            <person name="Chu C."/>
            <person name="Hu S."/>
            <person name="Bao Q."/>
            <person name="Yu J."/>
            <person name="Chou Y.-Y."/>
            <person name="Wang H.-S."/>
            <person name="Lee Y.-S."/>
        </authorList>
    </citation>
    <scope>NUCLEOTIDE SEQUENCE [LARGE SCALE GENOMIC DNA]</scope>
    <source>
        <strain>SC-B67</strain>
    </source>
</reference>
<comment type="function">
    <text evidence="1">Catalyzes the oxidation of either pyridoxine 5'-phosphate (PNP) or pyridoxamine 5'-phosphate (PMP) into pyridoxal 5'-phosphate (PLP).</text>
</comment>
<comment type="catalytic activity">
    <reaction evidence="1">
        <text>pyridoxamine 5'-phosphate + O2 + H2O = pyridoxal 5'-phosphate + H2O2 + NH4(+)</text>
        <dbReference type="Rhea" id="RHEA:15817"/>
        <dbReference type="ChEBI" id="CHEBI:15377"/>
        <dbReference type="ChEBI" id="CHEBI:15379"/>
        <dbReference type="ChEBI" id="CHEBI:16240"/>
        <dbReference type="ChEBI" id="CHEBI:28938"/>
        <dbReference type="ChEBI" id="CHEBI:58451"/>
        <dbReference type="ChEBI" id="CHEBI:597326"/>
        <dbReference type="EC" id="1.4.3.5"/>
    </reaction>
</comment>
<comment type="catalytic activity">
    <reaction evidence="1">
        <text>pyridoxine 5'-phosphate + O2 = pyridoxal 5'-phosphate + H2O2</text>
        <dbReference type="Rhea" id="RHEA:15149"/>
        <dbReference type="ChEBI" id="CHEBI:15379"/>
        <dbReference type="ChEBI" id="CHEBI:16240"/>
        <dbReference type="ChEBI" id="CHEBI:58589"/>
        <dbReference type="ChEBI" id="CHEBI:597326"/>
        <dbReference type="EC" id="1.4.3.5"/>
    </reaction>
</comment>
<comment type="cofactor">
    <cofactor evidence="1">
        <name>FMN</name>
        <dbReference type="ChEBI" id="CHEBI:58210"/>
    </cofactor>
    <text evidence="1">Binds 1 FMN per subunit.</text>
</comment>
<comment type="pathway">
    <text evidence="1">Cofactor metabolism; pyridoxal 5'-phosphate salvage; pyridoxal 5'-phosphate from pyridoxamine 5'-phosphate: step 1/1.</text>
</comment>
<comment type="pathway">
    <text evidence="1">Cofactor metabolism; pyridoxal 5'-phosphate salvage; pyridoxal 5'-phosphate from pyridoxine 5'-phosphate: step 1/1.</text>
</comment>
<comment type="subunit">
    <text evidence="1">Homodimer.</text>
</comment>
<comment type="similarity">
    <text evidence="1">Belongs to the pyridoxamine 5'-phosphate oxidase family.</text>
</comment>
<protein>
    <recommendedName>
        <fullName evidence="1">Pyridoxine/pyridoxamine 5'-phosphate oxidase</fullName>
        <ecNumber evidence="1">1.4.3.5</ecNumber>
    </recommendedName>
    <alternativeName>
        <fullName evidence="1">PNP/PMP oxidase</fullName>
        <shortName evidence="1">PNPOx</shortName>
    </alternativeName>
    <alternativeName>
        <fullName evidence="1">Pyridoxal 5'-phosphate synthase</fullName>
    </alternativeName>
</protein>
<accession>Q57PI9</accession>
<dbReference type="EC" id="1.4.3.5" evidence="1"/>
<dbReference type="EMBL" id="AE017220">
    <property type="protein sequence ID" value="AAX65372.1"/>
    <property type="molecule type" value="Genomic_DNA"/>
</dbReference>
<dbReference type="RefSeq" id="WP_001282334.1">
    <property type="nucleotide sequence ID" value="NC_006905.1"/>
</dbReference>
<dbReference type="SMR" id="Q57PI9"/>
<dbReference type="KEGG" id="sec:SCH_1466"/>
<dbReference type="HOGENOM" id="CLU_032263_2_2_6"/>
<dbReference type="UniPathway" id="UPA01068">
    <property type="reaction ID" value="UER00304"/>
</dbReference>
<dbReference type="UniPathway" id="UPA01068">
    <property type="reaction ID" value="UER00305"/>
</dbReference>
<dbReference type="Proteomes" id="UP000000538">
    <property type="component" value="Chromosome"/>
</dbReference>
<dbReference type="GO" id="GO:0010181">
    <property type="term" value="F:FMN binding"/>
    <property type="evidence" value="ECO:0007669"/>
    <property type="project" value="UniProtKB-UniRule"/>
</dbReference>
<dbReference type="GO" id="GO:0004733">
    <property type="term" value="F:pyridoxamine phosphate oxidase activity"/>
    <property type="evidence" value="ECO:0007669"/>
    <property type="project" value="UniProtKB-UniRule"/>
</dbReference>
<dbReference type="GO" id="GO:0008615">
    <property type="term" value="P:pyridoxine biosynthetic process"/>
    <property type="evidence" value="ECO:0007669"/>
    <property type="project" value="UniProtKB-KW"/>
</dbReference>
<dbReference type="FunFam" id="2.30.110.10:FF:000001">
    <property type="entry name" value="Pyridoxine/pyridoxamine 5'-phosphate oxidase"/>
    <property type="match status" value="1"/>
</dbReference>
<dbReference type="Gene3D" id="2.30.110.10">
    <property type="entry name" value="Electron Transport, Fmn-binding Protein, Chain A"/>
    <property type="match status" value="1"/>
</dbReference>
<dbReference type="HAMAP" id="MF_01629">
    <property type="entry name" value="PdxH"/>
    <property type="match status" value="1"/>
</dbReference>
<dbReference type="InterPro" id="IPR000659">
    <property type="entry name" value="Pyridox_Oxase"/>
</dbReference>
<dbReference type="InterPro" id="IPR019740">
    <property type="entry name" value="Pyridox_Oxase_CS"/>
</dbReference>
<dbReference type="InterPro" id="IPR011576">
    <property type="entry name" value="Pyridox_Oxase_N"/>
</dbReference>
<dbReference type="InterPro" id="IPR019576">
    <property type="entry name" value="Pyridoxamine_oxidase_dimer_C"/>
</dbReference>
<dbReference type="InterPro" id="IPR012349">
    <property type="entry name" value="Split_barrel_FMN-bd"/>
</dbReference>
<dbReference type="NCBIfam" id="TIGR00558">
    <property type="entry name" value="pdxH"/>
    <property type="match status" value="1"/>
</dbReference>
<dbReference type="NCBIfam" id="NF004231">
    <property type="entry name" value="PRK05679.1"/>
    <property type="match status" value="1"/>
</dbReference>
<dbReference type="PANTHER" id="PTHR10851:SF0">
    <property type="entry name" value="PYRIDOXINE-5'-PHOSPHATE OXIDASE"/>
    <property type="match status" value="1"/>
</dbReference>
<dbReference type="PANTHER" id="PTHR10851">
    <property type="entry name" value="PYRIDOXINE-5-PHOSPHATE OXIDASE"/>
    <property type="match status" value="1"/>
</dbReference>
<dbReference type="Pfam" id="PF10590">
    <property type="entry name" value="PNP_phzG_C"/>
    <property type="match status" value="1"/>
</dbReference>
<dbReference type="Pfam" id="PF01243">
    <property type="entry name" value="PNPOx_N"/>
    <property type="match status" value="1"/>
</dbReference>
<dbReference type="PIRSF" id="PIRSF000190">
    <property type="entry name" value="Pyd_amn-ph_oxd"/>
    <property type="match status" value="1"/>
</dbReference>
<dbReference type="SUPFAM" id="SSF50475">
    <property type="entry name" value="FMN-binding split barrel"/>
    <property type="match status" value="1"/>
</dbReference>
<dbReference type="PROSITE" id="PS01064">
    <property type="entry name" value="PYRIDOX_OXIDASE"/>
    <property type="match status" value="1"/>
</dbReference>
<feature type="chain" id="PRO_0000167750" description="Pyridoxine/pyridoxamine 5'-phosphate oxidase">
    <location>
        <begin position="1"/>
        <end position="218"/>
    </location>
</feature>
<feature type="binding site" evidence="1">
    <location>
        <begin position="14"/>
        <end position="17"/>
    </location>
    <ligand>
        <name>substrate</name>
    </ligand>
</feature>
<feature type="binding site" evidence="1">
    <location>
        <begin position="67"/>
        <end position="72"/>
    </location>
    <ligand>
        <name>FMN</name>
        <dbReference type="ChEBI" id="CHEBI:58210"/>
    </ligand>
</feature>
<feature type="binding site" evidence="1">
    <location>
        <position position="72"/>
    </location>
    <ligand>
        <name>substrate</name>
    </ligand>
</feature>
<feature type="binding site" evidence="1">
    <location>
        <begin position="82"/>
        <end position="83"/>
    </location>
    <ligand>
        <name>FMN</name>
        <dbReference type="ChEBI" id="CHEBI:58210"/>
    </ligand>
</feature>
<feature type="binding site" evidence="1">
    <location>
        <position position="88"/>
    </location>
    <ligand>
        <name>FMN</name>
        <dbReference type="ChEBI" id="CHEBI:58210"/>
    </ligand>
</feature>
<feature type="binding site" evidence="1">
    <location>
        <position position="89"/>
    </location>
    <ligand>
        <name>FMN</name>
        <dbReference type="ChEBI" id="CHEBI:58210"/>
    </ligand>
</feature>
<feature type="binding site" evidence="1">
    <location>
        <position position="111"/>
    </location>
    <ligand>
        <name>FMN</name>
        <dbReference type="ChEBI" id="CHEBI:58210"/>
    </ligand>
</feature>
<feature type="binding site" evidence="1">
    <location>
        <position position="129"/>
    </location>
    <ligand>
        <name>substrate</name>
    </ligand>
</feature>
<feature type="binding site" evidence="1">
    <location>
        <position position="133"/>
    </location>
    <ligand>
        <name>substrate</name>
    </ligand>
</feature>
<feature type="binding site" evidence="1">
    <location>
        <position position="137"/>
    </location>
    <ligand>
        <name>substrate</name>
    </ligand>
</feature>
<feature type="binding site" evidence="1">
    <location>
        <begin position="146"/>
        <end position="147"/>
    </location>
    <ligand>
        <name>FMN</name>
        <dbReference type="ChEBI" id="CHEBI:58210"/>
    </ligand>
</feature>
<feature type="binding site" evidence="1">
    <location>
        <position position="191"/>
    </location>
    <ligand>
        <name>FMN</name>
        <dbReference type="ChEBI" id="CHEBI:58210"/>
    </ligand>
</feature>
<feature type="binding site" evidence="1">
    <location>
        <begin position="197"/>
        <end position="199"/>
    </location>
    <ligand>
        <name>substrate</name>
    </ligand>
</feature>
<feature type="binding site" evidence="1">
    <location>
        <position position="201"/>
    </location>
    <ligand>
        <name>FMN</name>
        <dbReference type="ChEBI" id="CHEBI:58210"/>
    </ligand>
</feature>
<name>PDXH_SALCH</name>
<organism>
    <name type="scientific">Salmonella choleraesuis (strain SC-B67)</name>
    <dbReference type="NCBI Taxonomy" id="321314"/>
    <lineage>
        <taxon>Bacteria</taxon>
        <taxon>Pseudomonadati</taxon>
        <taxon>Pseudomonadota</taxon>
        <taxon>Gammaproteobacteria</taxon>
        <taxon>Enterobacterales</taxon>
        <taxon>Enterobacteriaceae</taxon>
        <taxon>Salmonella</taxon>
    </lineage>
</organism>
<evidence type="ECO:0000255" key="1">
    <source>
        <dbReference type="HAMAP-Rule" id="MF_01629"/>
    </source>
</evidence>
<proteinExistence type="inferred from homology"/>
<sequence>MSDNDQLQQIAHLRREYTKGGLRRRDLPAEPLTLFERWLGQACDARLADPTAMVVATVDDKGQPYQRIVLLKHYDEKGLVFYTNLGSRKAHQIEHNPRISLLFPWHMLERQVMVTGKAERLSTLEVVRYFHSRPRDSQIGAWVSKQSSRISARGILESKFLELKQKFQQGEVPLPSFWGGFRVSIEQMEFWQGGEHRLHDRFLYQRDDGAWKIDRLAP</sequence>
<gene>
    <name evidence="1" type="primary">pdxH</name>
    <name type="ordered locus">SCH_1466</name>
</gene>
<keyword id="KW-0285">Flavoprotein</keyword>
<keyword id="KW-0288">FMN</keyword>
<keyword id="KW-0560">Oxidoreductase</keyword>
<keyword id="KW-0664">Pyridoxine biosynthesis</keyword>